<accession>P69959</accession>
<accession>P19393</accession>
<accession>P31488</accession>
<accession>Q663K7</accession>
<dbReference type="EMBL" id="M35740">
    <property type="protein sequence ID" value="AAA98219.1"/>
    <property type="status" value="ALT_SEQ"/>
    <property type="molecule type" value="Genomic_DNA"/>
</dbReference>
<dbReference type="EMBL" id="AF074612">
    <property type="protein sequence ID" value="AAC69831.1"/>
    <property type="molecule type" value="Genomic_DNA"/>
</dbReference>
<dbReference type="EMBL" id="AF053946">
    <property type="protein sequence ID" value="AAC62572.1"/>
    <property type="molecule type" value="Genomic_DNA"/>
</dbReference>
<dbReference type="EMBL" id="AL117189">
    <property type="protein sequence ID" value="CAB54910.1"/>
    <property type="molecule type" value="Genomic_DNA"/>
</dbReference>
<dbReference type="EMBL" id="AE017043">
    <property type="protein sequence ID" value="AAS58569.1"/>
    <property type="molecule type" value="Genomic_DNA"/>
</dbReference>
<dbReference type="PIR" id="A37774">
    <property type="entry name" value="A37774"/>
</dbReference>
<dbReference type="PIR" id="T43592">
    <property type="entry name" value="T43592"/>
</dbReference>
<dbReference type="RefSeq" id="NP_395167.1">
    <property type="nucleotide sequence ID" value="NC_003131.1"/>
</dbReference>
<dbReference type="RefSeq" id="NP_857749.1">
    <property type="nucleotide sequence ID" value="NC_004836.1"/>
</dbReference>
<dbReference type="RefSeq" id="NP_857944.1">
    <property type="nucleotide sequence ID" value="NC_004839.1"/>
</dbReference>
<dbReference type="RefSeq" id="WP_002220918.1">
    <property type="nucleotide sequence ID" value="NZ_WUCM01000070.1"/>
</dbReference>
<dbReference type="IntAct" id="P69959">
    <property type="interactions" value="2"/>
</dbReference>
<dbReference type="PaxDb" id="214092-5832453"/>
<dbReference type="DNASU" id="1149308"/>
<dbReference type="EnsemblBacteria" id="AAS58569">
    <property type="protein sequence ID" value="AAS58569"/>
    <property type="gene ID" value="YP_pCD50"/>
</dbReference>
<dbReference type="KEGG" id="ype:YPCD1.33c"/>
<dbReference type="KEGG" id="ypm:YP_pCD50"/>
<dbReference type="PATRIC" id="fig|214092.21.peg.44"/>
<dbReference type="eggNOG" id="ENOG5032XT5">
    <property type="taxonomic scope" value="Bacteria"/>
</dbReference>
<dbReference type="HOGENOM" id="CLU_1864306_0_0_6"/>
<dbReference type="OMA" id="PYFWQKS"/>
<dbReference type="OrthoDB" id="6984106at2"/>
<dbReference type="Proteomes" id="UP000000815">
    <property type="component" value="Plasmid pCD1"/>
</dbReference>
<dbReference type="Proteomes" id="UP000001019">
    <property type="component" value="Plasmid pCD1"/>
</dbReference>
<dbReference type="InterPro" id="IPR022797">
    <property type="entry name" value="LcrR/CesD2"/>
</dbReference>
<dbReference type="InterPro" id="IPR013405">
    <property type="entry name" value="T3SS_LcrR"/>
</dbReference>
<dbReference type="NCBIfam" id="TIGR02572">
    <property type="entry name" value="LcrR"/>
    <property type="match status" value="1"/>
</dbReference>
<dbReference type="Pfam" id="PF09621">
    <property type="entry name" value="LcrR"/>
    <property type="match status" value="1"/>
</dbReference>
<feature type="chain" id="PRO_0000084374" description="Low calcium response locus protein R">
    <location>
        <begin position="1"/>
        <end position="146"/>
    </location>
</feature>
<feature type="sequence conflict" description="In Ref. 1; AAA98219." evidence="1" ref="1">
    <original>P</original>
    <variation>L</variation>
    <location>
        <position position="5"/>
    </location>
</feature>
<feature type="sequence conflict" description="In Ref. 1." evidence="1" ref="1">
    <original>S</original>
    <variation>C</variation>
    <location>
        <position position="120"/>
    </location>
</feature>
<evidence type="ECO:0000305" key="1"/>
<keyword id="KW-0106">Calcium</keyword>
<keyword id="KW-0614">Plasmid</keyword>
<keyword id="KW-1185">Reference proteome</keyword>
<organism>
    <name type="scientific">Yersinia pestis</name>
    <dbReference type="NCBI Taxonomy" id="632"/>
    <lineage>
        <taxon>Bacteria</taxon>
        <taxon>Pseudomonadati</taxon>
        <taxon>Pseudomonadota</taxon>
        <taxon>Gammaproteobacteria</taxon>
        <taxon>Enterobacterales</taxon>
        <taxon>Yersiniaceae</taxon>
        <taxon>Yersinia</taxon>
    </lineage>
</organism>
<sequence length="146" mass="16454">MMADPLIPWLTEHGLVCHPHTLSGTPISLGSAFQLAGLKLAWRVEIEQRRVWIVLIQRVEQRRGLKNPFAALYMLANAARAVLGPDYYLYGNVDVLAGSSLSTQRLAHFYRRWTGAKELSTGWFSLKVSQVITLSNMKKRQNNGFA</sequence>
<name>LCRR_YERPE</name>
<comment type="function">
    <text>Involved in the down-regulation of lcrGVH transcription in the presence or absence of calcium and is necessary for lcrG protein expression in the absence of calcium. Plays an important role in the regulation of the low-calcium response.</text>
</comment>
<protein>
    <recommendedName>
        <fullName>Low calcium response locus protein R</fullName>
    </recommendedName>
</protein>
<geneLocation type="plasmid">
    <name>pCD1</name>
</geneLocation>
<gene>
    <name type="primary">lcrR</name>
    <name type="ordered locus">YPCD1.33c</name>
    <name type="ordered locus">y5045</name>
    <name type="ordered locus">y0048</name>
    <name type="ordered locus">YP_pCD50</name>
</gene>
<proteinExistence type="predicted"/>
<reference key="1">
    <citation type="journal article" date="1990" name="J. Bacteriol.">
        <title>lcrR, a low-Ca2(+)-response locus with dual Ca2(+)-dependent functions in Yersinia pestis.</title>
        <authorList>
            <person name="Barve S.S."/>
            <person name="Straley S.C."/>
        </authorList>
    </citation>
    <scope>NUCLEOTIDE SEQUENCE [GENOMIC DNA]</scope>
    <source>
        <strain>KIM5 / Biovar Mediaevalis</strain>
    </source>
</reference>
<reference key="2">
    <citation type="journal article" date="1998" name="Infect. Immun.">
        <title>DNA sequencing and analysis of the low-Ca2+-response plasmid pCD1 of Yersinia pestis KIM5.</title>
        <authorList>
            <person name="Perry R.D."/>
            <person name="Straley S.C."/>
            <person name="Fetherston J.D."/>
            <person name="Rose D.J."/>
            <person name="Gregor J."/>
            <person name="Blattner F.R."/>
        </authorList>
    </citation>
    <scope>NUCLEOTIDE SEQUENCE [GENOMIC DNA]</scope>
    <source>
        <strain>KIM5 / Biovar Mediaevalis</strain>
    </source>
</reference>
<reference key="3">
    <citation type="journal article" date="1998" name="J. Bacteriol.">
        <title>Structural organization of virulence-associated plasmids of Yersinia pestis.</title>
        <authorList>
            <person name="Hu P."/>
            <person name="Elliott J."/>
            <person name="McCready P."/>
            <person name="Skowronski E."/>
            <person name="Garnes J."/>
            <person name="Kobayashi A."/>
            <person name="Brubaker R.R."/>
            <person name="Garcia E."/>
        </authorList>
    </citation>
    <scope>NUCLEOTIDE SEQUENCE [GENOMIC DNA]</scope>
    <source>
        <strain>KIM5 / Biovar Mediaevalis</strain>
    </source>
</reference>
<reference key="4">
    <citation type="journal article" date="2001" name="Nature">
        <title>Genome sequence of Yersinia pestis, the causative agent of plague.</title>
        <authorList>
            <person name="Parkhill J."/>
            <person name="Wren B.W."/>
            <person name="Thomson N.R."/>
            <person name="Titball R.W."/>
            <person name="Holden M.T.G."/>
            <person name="Prentice M.B."/>
            <person name="Sebaihia M."/>
            <person name="James K.D."/>
            <person name="Churcher C.M."/>
            <person name="Mungall K.L."/>
            <person name="Baker S."/>
            <person name="Basham D."/>
            <person name="Bentley S.D."/>
            <person name="Brooks K."/>
            <person name="Cerdeno-Tarraga A.-M."/>
            <person name="Chillingworth T."/>
            <person name="Cronin A."/>
            <person name="Davies R.M."/>
            <person name="Davis P."/>
            <person name="Dougan G."/>
            <person name="Feltwell T."/>
            <person name="Hamlin N."/>
            <person name="Holroyd S."/>
            <person name="Jagels K."/>
            <person name="Karlyshev A.V."/>
            <person name="Leather S."/>
            <person name="Moule S."/>
            <person name="Oyston P.C.F."/>
            <person name="Quail M.A."/>
            <person name="Rutherford K.M."/>
            <person name="Simmonds M."/>
            <person name="Skelton J."/>
            <person name="Stevens K."/>
            <person name="Whitehead S."/>
            <person name="Barrell B.G."/>
        </authorList>
    </citation>
    <scope>NUCLEOTIDE SEQUENCE [LARGE SCALE GENOMIC DNA]</scope>
    <source>
        <strain>CO-92 / Biovar Orientalis</strain>
    </source>
</reference>
<reference key="5">
    <citation type="journal article" date="2004" name="DNA Res.">
        <title>Complete genome sequence of Yersinia pestis strain 91001, an isolate avirulent to humans.</title>
        <authorList>
            <person name="Song Y."/>
            <person name="Tong Z."/>
            <person name="Wang J."/>
            <person name="Wang L."/>
            <person name="Guo Z."/>
            <person name="Han Y."/>
            <person name="Zhang J."/>
            <person name="Pei D."/>
            <person name="Zhou D."/>
            <person name="Qin H."/>
            <person name="Pang X."/>
            <person name="Han Y."/>
            <person name="Zhai J."/>
            <person name="Li M."/>
            <person name="Cui B."/>
            <person name="Qi Z."/>
            <person name="Jin L."/>
            <person name="Dai R."/>
            <person name="Chen F."/>
            <person name="Li S."/>
            <person name="Ye C."/>
            <person name="Du Z."/>
            <person name="Lin W."/>
            <person name="Wang J."/>
            <person name="Yu J."/>
            <person name="Yang H."/>
            <person name="Wang J."/>
            <person name="Huang P."/>
            <person name="Yang R."/>
        </authorList>
    </citation>
    <scope>NUCLEOTIDE SEQUENCE [LARGE SCALE GENOMIC DNA]</scope>
    <source>
        <strain>91001 / Biovar Mediaevalis</strain>
    </source>
</reference>